<proteinExistence type="evidence at protein level"/>
<feature type="chain" id="PRO_0000460572" description="Minor capsid protein P6">
    <location>
        <begin position="1"/>
        <end position="216"/>
    </location>
</feature>
<feature type="region of interest" description="Hydrophobic" evidence="4">
    <location>
        <begin position="1"/>
        <end position="21"/>
    </location>
</feature>
<gene>
    <name evidence="6" type="primary">A203R</name>
</gene>
<name>P6_PBCV1</name>
<sequence>MILVGIAVLILLAVFAILYYKQKEKFVVVGKFVEPIPSNPGQDFTLLPMDQTYTFADPVPDTATAFDVVLSRFTDKKAPADLLKGATFPEAAPYTDSEVENISKLALSRVKGPDAPVLSFISVEYAAKGVDNKKNTHYDIAFMVYDQVKNFSLKLVLVAVLDAKNKLWIKKFSSFNSFTPKDKGPKGVENIDETPLAEFIPDFVQFSRLYKDNANV</sequence>
<accession>Q84523</accession>
<organism evidence="6 7">
    <name type="scientific">Paramecium bursaria Chlorella virus 1</name>
    <name type="common">PBCV-1</name>
    <dbReference type="NCBI Taxonomy" id="10506"/>
    <lineage>
        <taxon>Viruses</taxon>
        <taxon>Varidnaviria</taxon>
        <taxon>Bamfordvirae</taxon>
        <taxon>Nucleocytoviricota</taxon>
        <taxon>Megaviricetes</taxon>
        <taxon>Algavirales</taxon>
        <taxon>Phycodnaviridae</taxon>
        <taxon>Chlorovirus</taxon>
    </lineage>
</organism>
<reference key="1">
    <citation type="journal article" date="1996" name="Virology">
        <title>Analysis of 76 kb of the chlorella virus PBCV-1 330-kb genome: map positions 182 to 258.</title>
        <authorList>
            <person name="Kutish G.F."/>
            <person name="Li Y."/>
            <person name="Lu Z."/>
            <person name="Furuta M."/>
            <person name="Rock D.L."/>
            <person name="van Etten J.L."/>
        </authorList>
    </citation>
    <scope>NUCLEOTIDE SEQUENCE [LARGE SCALE GENOMIC DNA]</scope>
</reference>
<reference key="2">
    <citation type="journal article" date="2010" name="J. Virol.">
        <title>Microarray analysis of Paramecium bursaria chlorella virus 1 transcription.</title>
        <authorList>
            <person name="Yanai-Balser G.M."/>
            <person name="Duncan G.A."/>
            <person name="Eudy J.D."/>
            <person name="Wang D."/>
            <person name="Li X."/>
            <person name="Agarkova I.V."/>
            <person name="Dunigan D.D."/>
            <person name="Van Etten J.L."/>
        </authorList>
    </citation>
    <scope>INDUCTION</scope>
</reference>
<reference key="3">
    <citation type="journal article" date="1997" name="Virology">
        <title>Proteolytic processing of Chlorella virus CVK2 capsid proteins.</title>
        <authorList>
            <person name="Songsri P."/>
            <person name="Hiramatsu S."/>
            <person name="Fujie M."/>
            <person name="Yamada T."/>
        </authorList>
    </citation>
    <scope>FUNCTION</scope>
    <scope>SUBCELLULAR LOCATION</scope>
    <scope>IDENTIFICATION</scope>
    <source>
        <strain>K2</strain>
    </source>
</reference>
<reference evidence="8" key="4">
    <citation type="journal article" date="2019" name="Nat. Commun.">
        <title>Near-atomic structure of a giant virus.</title>
        <authorList>
            <person name="Fang Q."/>
            <person name="Zhu D."/>
            <person name="Agarkova I."/>
            <person name="Adhikari J."/>
            <person name="Klose T."/>
            <person name="Liu Y."/>
            <person name="Chen Z."/>
            <person name="Sun Y."/>
            <person name="Gross M.L."/>
            <person name="Van Etten J.L."/>
            <person name="Zhang X."/>
            <person name="Rossmann M.G."/>
        </authorList>
    </citation>
    <scope>STRUCTURE BY ELECTRON MICROSCOPY (3.50 ANGSTROMS)</scope>
    <scope>FUNCTION</scope>
    <scope>SUBCELLULAR LOCATION</scope>
    <scope>INTERACTION WITH THE MAJOR CAPSID PROTEIN</scope>
</reference>
<reference evidence="9" key="5">
    <citation type="journal article" date="2022" name="Nat. Commun.">
        <title>Near-atomic, non-icosahedrally averaged structure of giant virus Paramecium bursaria chlorella virus 1.</title>
        <authorList>
            <person name="Shao Q."/>
            <person name="Agarkova I.V."/>
            <person name="Noel E.A."/>
            <person name="Dunigan D.D."/>
            <person name="Liu Y."/>
            <person name="Wang A."/>
            <person name="Guo M."/>
            <person name="Xie L."/>
            <person name="Zhao X."/>
            <person name="Rossmann M.G."/>
            <person name="Van Etten J.L."/>
            <person name="Klose T."/>
            <person name="Fang Q."/>
        </authorList>
    </citation>
    <scope>STRUCTURE BY ELECTRON MICROSCOPY (3.80 ANGSTROMS)</scope>
</reference>
<keyword id="KW-0002">3D-structure</keyword>
<keyword id="KW-0167">Capsid protein</keyword>
<keyword id="KW-0426">Late protein</keyword>
<keyword id="KW-1185">Reference proteome</keyword>
<keyword id="KW-0946">Virion</keyword>
<evidence type="ECO:0000269" key="1">
    <source>
    </source>
</evidence>
<evidence type="ECO:0000269" key="2">
    <source>
    </source>
</evidence>
<evidence type="ECO:0000303" key="3">
    <source>
    </source>
</evidence>
<evidence type="ECO:0000305" key="4"/>
<evidence type="ECO:0000305" key="5">
    <source>
    </source>
</evidence>
<evidence type="ECO:0000312" key="6">
    <source>
        <dbReference type="EMBL" id="AAC96571.1"/>
    </source>
</evidence>
<evidence type="ECO:0000312" key="7">
    <source>
        <dbReference type="Proteomes" id="UP000000862"/>
    </source>
</evidence>
<evidence type="ECO:0007744" key="8">
    <source>
        <dbReference type="PDB" id="6NCL"/>
    </source>
</evidence>
<evidence type="ECO:0007744" key="9">
    <source>
        <dbReference type="PDB" id="8H2I"/>
    </source>
</evidence>
<comment type="function">
    <text evidence="2">One of the minor capsid proteins that constitute a network internal to the major capsid proteins and outside the lipid membrane (PubMed:30674888). The minor capsid proteins glue and stabilize the capsomers (PubMed:30674888).</text>
</comment>
<comment type="subunit">
    <text evidence="2">Interacts with the major capsid protein.</text>
</comment>
<comment type="subcellular location">
    <subcellularLocation>
        <location evidence="2">Virion</location>
    </subcellularLocation>
</comment>
<comment type="induction">
    <text evidence="1">Expressed in the late phase of the viral replicative cycle.</text>
</comment>
<comment type="domain">
    <text evidence="5">The hydrophobic region might anchor the protein in the underlying inner membrane.</text>
</comment>
<protein>
    <recommendedName>
        <fullName>Minor capsid protein P6</fullName>
    </recommendedName>
    <alternativeName>
        <fullName evidence="3">Minor capsid protein Vp25</fullName>
    </alternativeName>
</protein>
<dbReference type="EMBL" id="JF411744">
    <property type="protein sequence ID" value="AAC96571.1"/>
    <property type="molecule type" value="Genomic_DNA"/>
</dbReference>
<dbReference type="PIR" id="T17693">
    <property type="entry name" value="T17693"/>
</dbReference>
<dbReference type="RefSeq" id="NP_048550.1">
    <property type="nucleotide sequence ID" value="NC_000852.5"/>
</dbReference>
<dbReference type="PDB" id="6NCL">
    <property type="method" value="EM"/>
    <property type="resolution" value="3.50 A"/>
    <property type="chains" value="a5=1-216"/>
</dbReference>
<dbReference type="PDB" id="8H2I">
    <property type="method" value="EM"/>
    <property type="resolution" value="3.80 A"/>
    <property type="chains" value="bQ=1-216"/>
</dbReference>
<dbReference type="PDBsum" id="6NCL"/>
<dbReference type="PDBsum" id="8H2I"/>
<dbReference type="EMDB" id="EMD-0436"/>
<dbReference type="EMDB" id="EMD-34438"/>
<dbReference type="SMR" id="Q84523"/>
<dbReference type="GeneID" id="917898"/>
<dbReference type="KEGG" id="vg:917898"/>
<dbReference type="OrthoDB" id="10962at10239"/>
<dbReference type="Proteomes" id="UP000000862">
    <property type="component" value="Genome"/>
</dbReference>
<dbReference type="GO" id="GO:0019028">
    <property type="term" value="C:viral capsid"/>
    <property type="evidence" value="ECO:0007669"/>
    <property type="project" value="UniProtKB-KW"/>
</dbReference>
<organismHost>
    <name type="scientific">Chlorella</name>
    <dbReference type="NCBI Taxonomy" id="3071"/>
</organismHost>